<dbReference type="EC" id="2.8.4.4" evidence="1"/>
<dbReference type="EMBL" id="AE008918">
    <property type="protein sequence ID" value="AAL53945.1"/>
    <property type="molecule type" value="Genomic_DNA"/>
</dbReference>
<dbReference type="PIR" id="AF3597">
    <property type="entry name" value="AF3597"/>
</dbReference>
<dbReference type="RefSeq" id="WP_002966068.1">
    <property type="nucleotide sequence ID" value="NZ_GG703779.1"/>
</dbReference>
<dbReference type="SMR" id="Q8YC29"/>
<dbReference type="GeneID" id="93015440"/>
<dbReference type="KEGG" id="bme:BMEII0703"/>
<dbReference type="KEGG" id="bmel:DK63_2539"/>
<dbReference type="PATRIC" id="fig|224914.52.peg.2661"/>
<dbReference type="eggNOG" id="COG0621">
    <property type="taxonomic scope" value="Bacteria"/>
</dbReference>
<dbReference type="PhylomeDB" id="Q8YC29"/>
<dbReference type="Proteomes" id="UP000000419">
    <property type="component" value="Chromosome II"/>
</dbReference>
<dbReference type="GO" id="GO:0005829">
    <property type="term" value="C:cytosol"/>
    <property type="evidence" value="ECO:0007669"/>
    <property type="project" value="TreeGrafter"/>
</dbReference>
<dbReference type="GO" id="GO:0051539">
    <property type="term" value="F:4 iron, 4 sulfur cluster binding"/>
    <property type="evidence" value="ECO:0007669"/>
    <property type="project" value="UniProtKB-UniRule"/>
</dbReference>
<dbReference type="GO" id="GO:0035599">
    <property type="term" value="F:aspartic acid methylthiotransferase activity"/>
    <property type="evidence" value="ECO:0007669"/>
    <property type="project" value="TreeGrafter"/>
</dbReference>
<dbReference type="GO" id="GO:0046872">
    <property type="term" value="F:metal ion binding"/>
    <property type="evidence" value="ECO:0007669"/>
    <property type="project" value="UniProtKB-KW"/>
</dbReference>
<dbReference type="GO" id="GO:0103039">
    <property type="term" value="F:protein methylthiotransferase activity"/>
    <property type="evidence" value="ECO:0007669"/>
    <property type="project" value="UniProtKB-EC"/>
</dbReference>
<dbReference type="GO" id="GO:0006400">
    <property type="term" value="P:tRNA modification"/>
    <property type="evidence" value="ECO:0007669"/>
    <property type="project" value="InterPro"/>
</dbReference>
<dbReference type="CDD" id="cd01335">
    <property type="entry name" value="Radical_SAM"/>
    <property type="match status" value="1"/>
</dbReference>
<dbReference type="FunFam" id="3.40.50.12160:FF:000002">
    <property type="entry name" value="Ribosomal protein S12 methylthiotransferase RimO"/>
    <property type="match status" value="1"/>
</dbReference>
<dbReference type="FunFam" id="3.80.30.20:FF:000001">
    <property type="entry name" value="tRNA-2-methylthio-N(6)-dimethylallyladenosine synthase 2"/>
    <property type="match status" value="1"/>
</dbReference>
<dbReference type="Gene3D" id="3.40.50.12160">
    <property type="entry name" value="Methylthiotransferase, N-terminal domain"/>
    <property type="match status" value="1"/>
</dbReference>
<dbReference type="Gene3D" id="2.40.50.140">
    <property type="entry name" value="Nucleic acid-binding proteins"/>
    <property type="match status" value="1"/>
</dbReference>
<dbReference type="Gene3D" id="3.80.30.20">
    <property type="entry name" value="tm_1862 like domain"/>
    <property type="match status" value="1"/>
</dbReference>
<dbReference type="HAMAP" id="MF_01865">
    <property type="entry name" value="MTTase_RimO"/>
    <property type="match status" value="1"/>
</dbReference>
<dbReference type="InterPro" id="IPR006638">
    <property type="entry name" value="Elp3/MiaA/NifB-like_rSAM"/>
</dbReference>
<dbReference type="InterPro" id="IPR005839">
    <property type="entry name" value="Methylthiotransferase"/>
</dbReference>
<dbReference type="InterPro" id="IPR020612">
    <property type="entry name" value="Methylthiotransferase_CS"/>
</dbReference>
<dbReference type="InterPro" id="IPR013848">
    <property type="entry name" value="Methylthiotransferase_N"/>
</dbReference>
<dbReference type="InterPro" id="IPR038135">
    <property type="entry name" value="Methylthiotransferase_N_sf"/>
</dbReference>
<dbReference type="InterPro" id="IPR012340">
    <property type="entry name" value="NA-bd_OB-fold"/>
</dbReference>
<dbReference type="InterPro" id="IPR005840">
    <property type="entry name" value="Ribosomal_uS12_MeSTrfase_RimO"/>
</dbReference>
<dbReference type="InterPro" id="IPR007197">
    <property type="entry name" value="rSAM"/>
</dbReference>
<dbReference type="InterPro" id="IPR023404">
    <property type="entry name" value="rSAM_horseshoe"/>
</dbReference>
<dbReference type="InterPro" id="IPR002792">
    <property type="entry name" value="TRAM_dom"/>
</dbReference>
<dbReference type="NCBIfam" id="TIGR01125">
    <property type="entry name" value="30S ribosomal protein S12 methylthiotransferase RimO"/>
    <property type="match status" value="1"/>
</dbReference>
<dbReference type="NCBIfam" id="TIGR00089">
    <property type="entry name" value="MiaB/RimO family radical SAM methylthiotransferase"/>
    <property type="match status" value="1"/>
</dbReference>
<dbReference type="PANTHER" id="PTHR43837">
    <property type="entry name" value="RIBOSOMAL PROTEIN S12 METHYLTHIOTRANSFERASE RIMO"/>
    <property type="match status" value="1"/>
</dbReference>
<dbReference type="PANTHER" id="PTHR43837:SF1">
    <property type="entry name" value="RIBOSOMAL PROTEIN US12 METHYLTHIOTRANSFERASE RIMO"/>
    <property type="match status" value="1"/>
</dbReference>
<dbReference type="Pfam" id="PF04055">
    <property type="entry name" value="Radical_SAM"/>
    <property type="match status" value="1"/>
</dbReference>
<dbReference type="Pfam" id="PF18693">
    <property type="entry name" value="TRAM_2"/>
    <property type="match status" value="1"/>
</dbReference>
<dbReference type="Pfam" id="PF00919">
    <property type="entry name" value="UPF0004"/>
    <property type="match status" value="1"/>
</dbReference>
<dbReference type="SFLD" id="SFLDG01082">
    <property type="entry name" value="B12-binding_domain_containing"/>
    <property type="match status" value="1"/>
</dbReference>
<dbReference type="SFLD" id="SFLDG01061">
    <property type="entry name" value="methylthiotransferase"/>
    <property type="match status" value="1"/>
</dbReference>
<dbReference type="SFLD" id="SFLDF00274">
    <property type="entry name" value="ribosomal_protein_S12_methylth"/>
    <property type="match status" value="1"/>
</dbReference>
<dbReference type="SMART" id="SM00729">
    <property type="entry name" value="Elp3"/>
    <property type="match status" value="1"/>
</dbReference>
<dbReference type="SUPFAM" id="SSF102114">
    <property type="entry name" value="Radical SAM enzymes"/>
    <property type="match status" value="1"/>
</dbReference>
<dbReference type="PROSITE" id="PS51449">
    <property type="entry name" value="MTTASE_N"/>
    <property type="match status" value="1"/>
</dbReference>
<dbReference type="PROSITE" id="PS01278">
    <property type="entry name" value="MTTASE_RADICAL"/>
    <property type="match status" value="1"/>
</dbReference>
<dbReference type="PROSITE" id="PS51918">
    <property type="entry name" value="RADICAL_SAM"/>
    <property type="match status" value="1"/>
</dbReference>
<dbReference type="PROSITE" id="PS50926">
    <property type="entry name" value="TRAM"/>
    <property type="match status" value="1"/>
</dbReference>
<feature type="chain" id="PRO_0000374724" description="Ribosomal protein uS12 methylthiotransferase RimO">
    <location>
        <begin position="1"/>
        <end position="437"/>
    </location>
</feature>
<feature type="domain" description="MTTase N-terminal" evidence="1">
    <location>
        <begin position="4"/>
        <end position="114"/>
    </location>
</feature>
<feature type="domain" description="Radical SAM core" evidence="2">
    <location>
        <begin position="131"/>
        <end position="369"/>
    </location>
</feature>
<feature type="domain" description="TRAM" evidence="1">
    <location>
        <begin position="372"/>
        <end position="437"/>
    </location>
</feature>
<feature type="binding site" evidence="1">
    <location>
        <position position="13"/>
    </location>
    <ligand>
        <name>[4Fe-4S] cluster</name>
        <dbReference type="ChEBI" id="CHEBI:49883"/>
        <label>1</label>
    </ligand>
</feature>
<feature type="binding site" evidence="1">
    <location>
        <position position="49"/>
    </location>
    <ligand>
        <name>[4Fe-4S] cluster</name>
        <dbReference type="ChEBI" id="CHEBI:49883"/>
        <label>1</label>
    </ligand>
</feature>
<feature type="binding site" evidence="1">
    <location>
        <position position="78"/>
    </location>
    <ligand>
        <name>[4Fe-4S] cluster</name>
        <dbReference type="ChEBI" id="CHEBI:49883"/>
        <label>1</label>
    </ligand>
</feature>
<feature type="binding site" evidence="1">
    <location>
        <position position="145"/>
    </location>
    <ligand>
        <name>[4Fe-4S] cluster</name>
        <dbReference type="ChEBI" id="CHEBI:49883"/>
        <label>2</label>
        <note>4Fe-4S-S-AdoMet</note>
    </ligand>
</feature>
<feature type="binding site" evidence="1">
    <location>
        <position position="149"/>
    </location>
    <ligand>
        <name>[4Fe-4S] cluster</name>
        <dbReference type="ChEBI" id="CHEBI:49883"/>
        <label>2</label>
        <note>4Fe-4S-S-AdoMet</note>
    </ligand>
</feature>
<feature type="binding site" evidence="1">
    <location>
        <position position="152"/>
    </location>
    <ligand>
        <name>[4Fe-4S] cluster</name>
        <dbReference type="ChEBI" id="CHEBI:49883"/>
        <label>2</label>
        <note>4Fe-4S-S-AdoMet</note>
    </ligand>
</feature>
<protein>
    <recommendedName>
        <fullName evidence="1">Ribosomal protein uS12 methylthiotransferase RimO</fullName>
        <shortName evidence="1">uS12 MTTase</shortName>
        <shortName evidence="1">uS12 methylthiotransferase</shortName>
        <ecNumber evidence="1">2.8.4.4</ecNumber>
    </recommendedName>
    <alternativeName>
        <fullName evidence="1">Ribosomal protein uS12 (aspartate-C(3))-methylthiotransferase</fullName>
    </alternativeName>
    <alternativeName>
        <fullName evidence="1">Ribosome maturation factor RimO</fullName>
    </alternativeName>
</protein>
<evidence type="ECO:0000255" key="1">
    <source>
        <dbReference type="HAMAP-Rule" id="MF_01865"/>
    </source>
</evidence>
<evidence type="ECO:0000255" key="2">
    <source>
        <dbReference type="PROSITE-ProRule" id="PRU01266"/>
    </source>
</evidence>
<name>RIMO_BRUME</name>
<proteinExistence type="inferred from homology"/>
<comment type="function">
    <text evidence="1">Catalyzes the methylthiolation of an aspartic acid residue of ribosomal protein uS12.</text>
</comment>
<comment type="catalytic activity">
    <reaction evidence="1">
        <text>L-aspartate(89)-[ribosomal protein uS12]-hydrogen + (sulfur carrier)-SH + AH2 + 2 S-adenosyl-L-methionine = 3-methylsulfanyl-L-aspartate(89)-[ribosomal protein uS12]-hydrogen + (sulfur carrier)-H + 5'-deoxyadenosine + L-methionine + A + S-adenosyl-L-homocysteine + 2 H(+)</text>
        <dbReference type="Rhea" id="RHEA:37087"/>
        <dbReference type="Rhea" id="RHEA-COMP:10460"/>
        <dbReference type="Rhea" id="RHEA-COMP:10461"/>
        <dbReference type="Rhea" id="RHEA-COMP:14737"/>
        <dbReference type="Rhea" id="RHEA-COMP:14739"/>
        <dbReference type="ChEBI" id="CHEBI:13193"/>
        <dbReference type="ChEBI" id="CHEBI:15378"/>
        <dbReference type="ChEBI" id="CHEBI:17319"/>
        <dbReference type="ChEBI" id="CHEBI:17499"/>
        <dbReference type="ChEBI" id="CHEBI:29917"/>
        <dbReference type="ChEBI" id="CHEBI:29961"/>
        <dbReference type="ChEBI" id="CHEBI:57844"/>
        <dbReference type="ChEBI" id="CHEBI:57856"/>
        <dbReference type="ChEBI" id="CHEBI:59789"/>
        <dbReference type="ChEBI" id="CHEBI:64428"/>
        <dbReference type="ChEBI" id="CHEBI:73599"/>
        <dbReference type="EC" id="2.8.4.4"/>
    </reaction>
</comment>
<comment type="cofactor">
    <cofactor evidence="1">
        <name>[4Fe-4S] cluster</name>
        <dbReference type="ChEBI" id="CHEBI:49883"/>
    </cofactor>
    <text evidence="1">Binds 2 [4Fe-4S] clusters. One cluster is coordinated with 3 cysteines and an exchangeable S-adenosyl-L-methionine.</text>
</comment>
<comment type="subcellular location">
    <subcellularLocation>
        <location evidence="1">Cytoplasm</location>
    </subcellularLocation>
</comment>
<comment type="similarity">
    <text evidence="1">Belongs to the methylthiotransferase family. RimO subfamily.</text>
</comment>
<sequence length="437" mass="48774">MSAPRVSFVSLGCPKALVDSERIITGLRSEGYEISRKHDGADLVIVNTCGFLDSARDESLEAIGLALNENGKVIVTGCLGAEPDVIRERHPNVLAITGPQAYESVMNAVHEVAPPAHDPFVDLVPPQGVKLTPRHYAYLKISEGCSNRCSFCIIPALRGDLVSRPINEVLREAEKLVQAGVKEILVISQDTSAYGLDIKYQEAMWQDRTVRTKFLDLSRELGEMGVWVRMHYVYPYPHVDEVIPLMAEGKILPYLDIPFQHASPAVLKNMRRPAHQEKTSRRIQAWRETCPDLAVRSTFIVGYPGETEEDFQMLLDWLDEAKIERAGCFKYEAVKGAKANDLGLEQVPEEVKEARWHRFMAKQQQISTNLLKKKVGKRLPVIIDEANGTIGKGRTRYDAPEIDGSVHISSRRPLRVGDIVTVKIEASDAYDLHGTAV</sequence>
<keyword id="KW-0004">4Fe-4S</keyword>
<keyword id="KW-0963">Cytoplasm</keyword>
<keyword id="KW-0408">Iron</keyword>
<keyword id="KW-0411">Iron-sulfur</keyword>
<keyword id="KW-0479">Metal-binding</keyword>
<keyword id="KW-0949">S-adenosyl-L-methionine</keyword>
<keyword id="KW-0808">Transferase</keyword>
<gene>
    <name evidence="1" type="primary">rimO</name>
    <name type="ordered locus">BMEII0703</name>
</gene>
<reference key="1">
    <citation type="journal article" date="2002" name="Proc. Natl. Acad. Sci. U.S.A.">
        <title>The genome sequence of the facultative intracellular pathogen Brucella melitensis.</title>
        <authorList>
            <person name="DelVecchio V.G."/>
            <person name="Kapatral V."/>
            <person name="Redkar R.J."/>
            <person name="Patra G."/>
            <person name="Mujer C."/>
            <person name="Los T."/>
            <person name="Ivanova N."/>
            <person name="Anderson I."/>
            <person name="Bhattacharyya A."/>
            <person name="Lykidis A."/>
            <person name="Reznik G."/>
            <person name="Jablonski L."/>
            <person name="Larsen N."/>
            <person name="D'Souza M."/>
            <person name="Bernal A."/>
            <person name="Mazur M."/>
            <person name="Goltsman E."/>
            <person name="Selkov E."/>
            <person name="Elzer P.H."/>
            <person name="Hagius S."/>
            <person name="O'Callaghan D."/>
            <person name="Letesson J.-J."/>
            <person name="Haselkorn R."/>
            <person name="Kyrpides N.C."/>
            <person name="Overbeek R."/>
        </authorList>
    </citation>
    <scope>NUCLEOTIDE SEQUENCE [LARGE SCALE GENOMIC DNA]</scope>
    <source>
        <strain>ATCC 23456 / CCUG 17765 / NCTC 10094 / 16M</strain>
    </source>
</reference>
<accession>Q8YC29</accession>
<organism>
    <name type="scientific">Brucella melitensis biotype 1 (strain ATCC 23456 / CCUG 17765 / NCTC 10094 / 16M)</name>
    <dbReference type="NCBI Taxonomy" id="224914"/>
    <lineage>
        <taxon>Bacteria</taxon>
        <taxon>Pseudomonadati</taxon>
        <taxon>Pseudomonadota</taxon>
        <taxon>Alphaproteobacteria</taxon>
        <taxon>Hyphomicrobiales</taxon>
        <taxon>Brucellaceae</taxon>
        <taxon>Brucella/Ochrobactrum group</taxon>
        <taxon>Brucella</taxon>
    </lineage>
</organism>